<keyword id="KW-0880">Kelch repeat</keyword>
<keyword id="KW-1185">Reference proteome</keyword>
<keyword id="KW-0677">Repeat</keyword>
<feature type="chain" id="PRO_0000119081" description="Kelch repeat and BTB domain-containing protein 4">
    <location>
        <begin position="1"/>
        <end position="543"/>
    </location>
</feature>
<feature type="domain" description="BTB" evidence="3">
    <location>
        <begin position="70"/>
        <end position="137"/>
    </location>
</feature>
<feature type="domain" description="BACK">
    <location>
        <begin position="172"/>
        <end position="264"/>
    </location>
</feature>
<feature type="repeat" description="Kelch 1" evidence="2">
    <location>
        <begin position="264"/>
        <end position="310"/>
    </location>
</feature>
<feature type="repeat" description="Kelch 2" evidence="2">
    <location>
        <begin position="311"/>
        <end position="353"/>
    </location>
</feature>
<feature type="repeat" description="Kelch 3" evidence="2">
    <location>
        <begin position="356"/>
        <end position="403"/>
    </location>
</feature>
<feature type="repeat" description="Kelch 4" evidence="2">
    <location>
        <begin position="405"/>
        <end position="455"/>
    </location>
</feature>
<feature type="repeat" description="Kelch 5" evidence="2">
    <location>
        <begin position="457"/>
        <end position="505"/>
    </location>
</feature>
<accession>Q9N010</accession>
<comment type="function">
    <text evidence="1">Substrate-specific adapter of a BCR (BTB-CUL3-RBX1) E3 ubiquitin ligase complex which targets CoREST corepressor complex components RCOR1, KDM1A/LSD1 and HDAC2 for proteasomal degradation. RCOR1 is likely to be the primary target while degradation of KDM1A and HDAC2 is likely due to their association with RCOR1. Also targets RCOR3, MIER2 and MIER3 for proteasomal degradation as well as associated proteins ZNF217 and RREB1. Degradation is dependent on the presence of an ELM2 domain in the target proteins.</text>
</comment>
<comment type="subunit">
    <text evidence="1">Component of the BCR(KBTBD4) E3 ubiquitin ligase complex, at least composed of CUL3, KBTBD4 and RBX1.</text>
</comment>
<comment type="caution">
    <text evidence="4">It is uncertain whether Met-1 or Met-26 is the initiator.</text>
</comment>
<organism>
    <name type="scientific">Macaca fascicularis</name>
    <name type="common">Crab-eating macaque</name>
    <name type="synonym">Cynomolgus monkey</name>
    <dbReference type="NCBI Taxonomy" id="9541"/>
    <lineage>
        <taxon>Eukaryota</taxon>
        <taxon>Metazoa</taxon>
        <taxon>Chordata</taxon>
        <taxon>Craniata</taxon>
        <taxon>Vertebrata</taxon>
        <taxon>Euteleostomi</taxon>
        <taxon>Mammalia</taxon>
        <taxon>Eutheria</taxon>
        <taxon>Euarchontoglires</taxon>
        <taxon>Primates</taxon>
        <taxon>Haplorrhini</taxon>
        <taxon>Catarrhini</taxon>
        <taxon>Cercopithecidae</taxon>
        <taxon>Cercopithecinae</taxon>
        <taxon>Macaca</taxon>
    </lineage>
</organism>
<proteinExistence type="evidence at transcript level"/>
<dbReference type="EMBL" id="AB046637">
    <property type="protein sequence ID" value="BAB03555.1"/>
    <property type="molecule type" value="mRNA"/>
</dbReference>
<dbReference type="BMRB" id="Q9N010"/>
<dbReference type="SMR" id="Q9N010"/>
<dbReference type="STRING" id="9541.ENSMFAP00000019903"/>
<dbReference type="eggNOG" id="KOG4441">
    <property type="taxonomic scope" value="Eukaryota"/>
</dbReference>
<dbReference type="Proteomes" id="UP000233100">
    <property type="component" value="Unplaced"/>
</dbReference>
<dbReference type="CDD" id="cd18481">
    <property type="entry name" value="BACK_KBTBD4"/>
    <property type="match status" value="1"/>
</dbReference>
<dbReference type="CDD" id="cd18272">
    <property type="entry name" value="BTB_POZ_KBTBD4"/>
    <property type="match status" value="1"/>
</dbReference>
<dbReference type="Gene3D" id="1.25.40.420">
    <property type="match status" value="1"/>
</dbReference>
<dbReference type="Gene3D" id="2.120.10.80">
    <property type="entry name" value="Kelch-type beta propeller"/>
    <property type="match status" value="1"/>
</dbReference>
<dbReference type="Gene3D" id="3.30.710.10">
    <property type="entry name" value="Potassium Channel Kv1.1, Chain A"/>
    <property type="match status" value="1"/>
</dbReference>
<dbReference type="InterPro" id="IPR011705">
    <property type="entry name" value="BACK"/>
</dbReference>
<dbReference type="InterPro" id="IPR017096">
    <property type="entry name" value="BTB-kelch_protein"/>
</dbReference>
<dbReference type="InterPro" id="IPR000210">
    <property type="entry name" value="BTB/POZ_dom"/>
</dbReference>
<dbReference type="InterPro" id="IPR042884">
    <property type="entry name" value="KBTBD4"/>
</dbReference>
<dbReference type="InterPro" id="IPR042950">
    <property type="entry name" value="KBTBD4_BACK"/>
</dbReference>
<dbReference type="InterPro" id="IPR042949">
    <property type="entry name" value="KBTBD4_BTB_POZ"/>
</dbReference>
<dbReference type="InterPro" id="IPR015915">
    <property type="entry name" value="Kelch-typ_b-propeller"/>
</dbReference>
<dbReference type="InterPro" id="IPR011498">
    <property type="entry name" value="Kelch_2"/>
</dbReference>
<dbReference type="InterPro" id="IPR011333">
    <property type="entry name" value="SKP1/BTB/POZ_sf"/>
</dbReference>
<dbReference type="PANTHER" id="PTHR47195">
    <property type="entry name" value="KELCH REPEAT AND BTB DOMAIN-CONTAINING PROTEIN 4"/>
    <property type="match status" value="1"/>
</dbReference>
<dbReference type="PANTHER" id="PTHR47195:SF1">
    <property type="entry name" value="KELCH REPEAT AND BTB DOMAIN-CONTAINING PROTEIN 4"/>
    <property type="match status" value="1"/>
</dbReference>
<dbReference type="Pfam" id="PF07707">
    <property type="entry name" value="BACK"/>
    <property type="match status" value="1"/>
</dbReference>
<dbReference type="Pfam" id="PF00651">
    <property type="entry name" value="BTB"/>
    <property type="match status" value="1"/>
</dbReference>
<dbReference type="Pfam" id="PF07646">
    <property type="entry name" value="Kelch_2"/>
    <property type="match status" value="1"/>
</dbReference>
<dbReference type="PIRSF" id="PIRSF037037">
    <property type="entry name" value="Kelch-like_protein_gigaxonin"/>
    <property type="match status" value="1"/>
</dbReference>
<dbReference type="SMART" id="SM00875">
    <property type="entry name" value="BACK"/>
    <property type="match status" value="1"/>
</dbReference>
<dbReference type="SMART" id="SM00225">
    <property type="entry name" value="BTB"/>
    <property type="match status" value="1"/>
</dbReference>
<dbReference type="SUPFAM" id="SSF117281">
    <property type="entry name" value="Kelch motif"/>
    <property type="match status" value="1"/>
</dbReference>
<dbReference type="SUPFAM" id="SSF54695">
    <property type="entry name" value="POZ domain"/>
    <property type="match status" value="1"/>
</dbReference>
<dbReference type="PROSITE" id="PS50097">
    <property type="entry name" value="BTB"/>
    <property type="match status" value="1"/>
</dbReference>
<protein>
    <recommendedName>
        <fullName>Kelch repeat and BTB domain-containing protein 4</fullName>
    </recommendedName>
</protein>
<name>KBTB4_MACFA</name>
<evidence type="ECO:0000250" key="1">
    <source>
        <dbReference type="UniProtKB" id="Q9NVX7"/>
    </source>
</evidence>
<evidence type="ECO:0000255" key="2"/>
<evidence type="ECO:0000255" key="3">
    <source>
        <dbReference type="PROSITE-ProRule" id="PRU00037"/>
    </source>
</evidence>
<evidence type="ECO:0000305" key="4"/>
<reference key="1">
    <citation type="submission" date="2000-07" db="EMBL/GenBank/DDBJ databases">
        <title>Isolation of full-length cDNA clones from macaque brain cDNA libraries.</title>
        <authorList>
            <person name="Osada N."/>
            <person name="Hida M."/>
            <person name="Kusuda J."/>
            <person name="Tanuma R."/>
            <person name="Iseki K."/>
            <person name="Hirai M."/>
            <person name="Terao K."/>
            <person name="Suzuki Y."/>
            <person name="Sugano S."/>
            <person name="Hashimoto K."/>
        </authorList>
    </citation>
    <scope>NUCLEOTIDE SEQUENCE [LARGE SCALE MRNA]</scope>
    <source>
        <tissue>Brain cortex</tissue>
    </source>
</reference>
<sequence length="543" mass="61054">MAVNSASYSRWCCFADSWQREKLASMESPEEPGASMDENYFVNYTFKDRSHSGRVAQGTMKLCLEEELFADVTISVEGREFQLHRLVLSAQSCFFRSMFTSNLKEAHNRVIVLQDVSESVFQLLVDYIYHGTVKLRAEELQEIYEVSDMYQLTSLFEECSRFLARTVQVGNCLQVMWLADRHSDPELYTAAKHCAKTHLAQLQNTEEFLHLPHHLLTDIISDGVPCSQNPTEAIEAWINFNKEEREAFAESLRTSLKEIGENVHIYLIGKESSRTHSLAVSLHCAEDDSISVSGQNSLCHQITAACKHGGDLYVVGGSIPRRMWKCNNATVDWEWCAPLPRDRLRHTLVSVPGKDAIYSLGGKTLQDTLSNAVIYYRVGDNVWTETTQLEVAVSGAAGANLNGIIYLLGGEENDLDFFTKPSRLIQCFDTETDKCHVKPYVLPFAGHMHAAVHKDLVFIVAEGDSLVCYNPLLDSFTRLCLPEAWSSAPSLWKIASRNGSIYVFRDRYKKGDANTYKLDPATSAVTVTRGIKVLLTNLQFVLA</sequence>
<gene>
    <name type="primary">KBTBD4</name>
    <name type="ORF">QccE-13608</name>
</gene>